<comment type="function">
    <text evidence="4">Acts as an E3 ubiquitin-protein ligase, or as part of E3 complex, which accepts ubiquitin from specific E2 ubiquitin-conjugating enzymes and then transfers it to substrates (in vitro).</text>
</comment>
<comment type="catalytic activity">
    <reaction>
        <text>S-ubiquitinyl-[E2 ubiquitin-conjugating enzyme]-L-cysteine + [acceptor protein]-L-lysine = [E2 ubiquitin-conjugating enzyme]-L-cysteine + N(6)-ubiquitinyl-[acceptor protein]-L-lysine.</text>
        <dbReference type="EC" id="2.3.2.27"/>
    </reaction>
</comment>
<comment type="pathway">
    <text>Protein modification; protein ubiquitination.</text>
</comment>
<comment type="domain">
    <text evidence="1">The RING-type zinc finger domain mediates binding to an E2 ubiquitin-conjugating enzyme.</text>
</comment>
<comment type="PTM">
    <text evidence="3">Myristoylated (in vitro).</text>
</comment>
<comment type="similarity">
    <text evidence="5">Belongs to the RING-type zinc finger family. LOG2 subfamily.</text>
</comment>
<name>LUL1_ARATH</name>
<feature type="initiator methionine" description="Removed">
    <location>
        <position position="1"/>
    </location>
</feature>
<feature type="chain" id="PRO_0000419947" description="Probable E3 ubiquitin-protein ligase LUL1">
    <location>
        <begin position="2"/>
        <end position="337"/>
    </location>
</feature>
<feature type="zinc finger region" description="RING-type; atypical" evidence="2">
    <location>
        <begin position="285"/>
        <end position="324"/>
    </location>
</feature>
<feature type="region of interest" description="DAR2 domain">
    <location>
        <begin position="139"/>
        <end position="255"/>
    </location>
</feature>
<feature type="lipid moiety-binding region" description="N-myristoyl glycine" evidence="3">
    <location>
        <position position="2"/>
    </location>
</feature>
<feature type="sequence conflict" description="In Ref. 4; BAC41920." evidence="5" ref="4">
    <original>E</original>
    <variation>D</variation>
    <location>
        <position position="29"/>
    </location>
</feature>
<feature type="sequence conflict" description="In Ref. 6; AAM67190." evidence="5" ref="6">
    <original>V</original>
    <variation>A</variation>
    <location>
        <position position="40"/>
    </location>
</feature>
<feature type="sequence conflict" description="In Ref. 4; BAC41920." evidence="5" ref="4">
    <original>H</original>
    <variation>D</variation>
    <location>
        <position position="106"/>
    </location>
</feature>
<gene>
    <name type="primary">LUL1</name>
    <name type="synonym">RF370</name>
    <name type="ordered locus">At5g03200</name>
    <name type="ORF">F15A17_230</name>
    <name type="ORF">MOK16.11</name>
</gene>
<organism>
    <name type="scientific">Arabidopsis thaliana</name>
    <name type="common">Mouse-ear cress</name>
    <dbReference type="NCBI Taxonomy" id="3702"/>
    <lineage>
        <taxon>Eukaryota</taxon>
        <taxon>Viridiplantae</taxon>
        <taxon>Streptophyta</taxon>
        <taxon>Embryophyta</taxon>
        <taxon>Tracheophyta</taxon>
        <taxon>Spermatophyta</taxon>
        <taxon>Magnoliopsida</taxon>
        <taxon>eudicotyledons</taxon>
        <taxon>Gunneridae</taxon>
        <taxon>Pentapetalae</taxon>
        <taxon>rosids</taxon>
        <taxon>malvids</taxon>
        <taxon>Brassicales</taxon>
        <taxon>Brassicaceae</taxon>
        <taxon>Camelineae</taxon>
        <taxon>Arabidopsis</taxon>
    </lineage>
</organism>
<proteinExistence type="evidence at protein level"/>
<evidence type="ECO:0000250" key="1"/>
<evidence type="ECO:0000255" key="2">
    <source>
        <dbReference type="PROSITE-ProRule" id="PRU00175"/>
    </source>
</evidence>
<evidence type="ECO:0000269" key="3">
    <source>
    </source>
</evidence>
<evidence type="ECO:0000269" key="4">
    <source>
    </source>
</evidence>
<evidence type="ECO:0000305" key="5"/>
<dbReference type="EC" id="2.3.2.27"/>
<dbReference type="EMBL" id="AB005240">
    <property type="protein sequence ID" value="BAB08380.1"/>
    <property type="molecule type" value="Genomic_DNA"/>
</dbReference>
<dbReference type="EMBL" id="AL163002">
    <property type="protein sequence ID" value="CAB86087.1"/>
    <property type="molecule type" value="Genomic_DNA"/>
</dbReference>
<dbReference type="EMBL" id="CP002688">
    <property type="protein sequence ID" value="AED90569.1"/>
    <property type="molecule type" value="Genomic_DNA"/>
</dbReference>
<dbReference type="EMBL" id="AK117244">
    <property type="protein sequence ID" value="BAC41920.1"/>
    <property type="molecule type" value="mRNA"/>
</dbReference>
<dbReference type="EMBL" id="BT025883">
    <property type="protein sequence ID" value="ABF85785.1"/>
    <property type="molecule type" value="mRNA"/>
</dbReference>
<dbReference type="EMBL" id="AY088884">
    <property type="protein sequence ID" value="AAM67190.1"/>
    <property type="molecule type" value="mRNA"/>
</dbReference>
<dbReference type="PIR" id="T48341">
    <property type="entry name" value="T48341"/>
</dbReference>
<dbReference type="RefSeq" id="NP_195940.1">
    <property type="nucleotide sequence ID" value="NM_120398.3"/>
</dbReference>
<dbReference type="SMR" id="Q9LYW5"/>
<dbReference type="BioGRID" id="17184">
    <property type="interactions" value="11"/>
</dbReference>
<dbReference type="FunCoup" id="Q9LYW5">
    <property type="interactions" value="1175"/>
</dbReference>
<dbReference type="IntAct" id="Q9LYW5">
    <property type="interactions" value="11"/>
</dbReference>
<dbReference type="STRING" id="3702.Q9LYW5"/>
<dbReference type="GlyGen" id="Q9LYW5">
    <property type="glycosylation" value="1 site"/>
</dbReference>
<dbReference type="iPTMnet" id="Q9LYW5"/>
<dbReference type="PaxDb" id="3702-AT5G03200.1"/>
<dbReference type="ProteomicsDB" id="238782"/>
<dbReference type="EnsemblPlants" id="AT5G03200.1">
    <property type="protein sequence ID" value="AT5G03200.1"/>
    <property type="gene ID" value="AT5G03200"/>
</dbReference>
<dbReference type="GeneID" id="831908"/>
<dbReference type="Gramene" id="AT5G03200.1">
    <property type="protein sequence ID" value="AT5G03200.1"/>
    <property type="gene ID" value="AT5G03200"/>
</dbReference>
<dbReference type="KEGG" id="ath:AT5G03200"/>
<dbReference type="Araport" id="AT5G03200"/>
<dbReference type="TAIR" id="AT5G03200">
    <property type="gene designation" value="LUL1"/>
</dbReference>
<dbReference type="eggNOG" id="KOG4265">
    <property type="taxonomic scope" value="Eukaryota"/>
</dbReference>
<dbReference type="HOGENOM" id="CLU_016631_0_0_1"/>
<dbReference type="InParanoid" id="Q9LYW5"/>
<dbReference type="OMA" id="PGWICIF"/>
<dbReference type="PhylomeDB" id="Q9LYW5"/>
<dbReference type="UniPathway" id="UPA00143"/>
<dbReference type="PRO" id="PR:Q9LYW5"/>
<dbReference type="Proteomes" id="UP000006548">
    <property type="component" value="Chromosome 5"/>
</dbReference>
<dbReference type="ExpressionAtlas" id="Q9LYW5">
    <property type="expression patterns" value="baseline and differential"/>
</dbReference>
<dbReference type="GO" id="GO:0061630">
    <property type="term" value="F:ubiquitin protein ligase activity"/>
    <property type="evidence" value="ECO:0007669"/>
    <property type="project" value="InterPro"/>
</dbReference>
<dbReference type="GO" id="GO:0004842">
    <property type="term" value="F:ubiquitin-protein transferase activity"/>
    <property type="evidence" value="ECO:0000314"/>
    <property type="project" value="TAIR"/>
</dbReference>
<dbReference type="GO" id="GO:0008270">
    <property type="term" value="F:zinc ion binding"/>
    <property type="evidence" value="ECO:0007669"/>
    <property type="project" value="UniProtKB-KW"/>
</dbReference>
<dbReference type="GO" id="GO:0016567">
    <property type="term" value="P:protein ubiquitination"/>
    <property type="evidence" value="ECO:0007669"/>
    <property type="project" value="UniProtKB-UniPathway"/>
</dbReference>
<dbReference type="CDD" id="cd16789">
    <property type="entry name" value="mRING-HC-C3HC5_MGRN1-like"/>
    <property type="match status" value="1"/>
</dbReference>
<dbReference type="FunFam" id="3.30.40.10:FF:000115">
    <property type="entry name" value="probable E3 ubiquitin-protein ligase LOG2"/>
    <property type="match status" value="1"/>
</dbReference>
<dbReference type="Gene3D" id="3.30.40.10">
    <property type="entry name" value="Zinc/RING finger domain, C3HC4 (zinc finger)"/>
    <property type="match status" value="1"/>
</dbReference>
<dbReference type="InterPro" id="IPR045195">
    <property type="entry name" value="LOG2-like_mRING_C3HC5"/>
</dbReference>
<dbReference type="InterPro" id="IPR045194">
    <property type="entry name" value="MGRN1/RNF157-like"/>
</dbReference>
<dbReference type="InterPro" id="IPR001841">
    <property type="entry name" value="Znf_RING"/>
</dbReference>
<dbReference type="InterPro" id="IPR013083">
    <property type="entry name" value="Znf_RING/FYVE/PHD"/>
</dbReference>
<dbReference type="PANTHER" id="PTHR22996:SF10">
    <property type="entry name" value="E3 UBIQUITIN-PROTEIN LIGASE LUL1-RELATED"/>
    <property type="match status" value="1"/>
</dbReference>
<dbReference type="PANTHER" id="PTHR22996">
    <property type="entry name" value="MAHOGUNIN"/>
    <property type="match status" value="1"/>
</dbReference>
<dbReference type="Pfam" id="PF13920">
    <property type="entry name" value="zf-C3HC4_3"/>
    <property type="match status" value="1"/>
</dbReference>
<dbReference type="SMART" id="SM00184">
    <property type="entry name" value="RING"/>
    <property type="match status" value="1"/>
</dbReference>
<dbReference type="SUPFAM" id="SSF57850">
    <property type="entry name" value="RING/U-box"/>
    <property type="match status" value="1"/>
</dbReference>
<dbReference type="PROSITE" id="PS50089">
    <property type="entry name" value="ZF_RING_2"/>
    <property type="match status" value="1"/>
</dbReference>
<reference key="1">
    <citation type="journal article" date="1997" name="DNA Res.">
        <title>Structural analysis of Arabidopsis thaliana chromosome 5. I. Sequence features of the 1.6 Mb regions covered by twenty physically assigned P1 clones.</title>
        <authorList>
            <person name="Sato S."/>
            <person name="Kotani H."/>
            <person name="Nakamura Y."/>
            <person name="Kaneko T."/>
            <person name="Asamizu E."/>
            <person name="Fukami M."/>
            <person name="Miyajima N."/>
            <person name="Tabata S."/>
        </authorList>
    </citation>
    <scope>NUCLEOTIDE SEQUENCE [LARGE SCALE GENOMIC DNA]</scope>
    <source>
        <strain>cv. Columbia</strain>
    </source>
</reference>
<reference key="2">
    <citation type="journal article" date="2000" name="Nature">
        <title>Sequence and analysis of chromosome 5 of the plant Arabidopsis thaliana.</title>
        <authorList>
            <person name="Tabata S."/>
            <person name="Kaneko T."/>
            <person name="Nakamura Y."/>
            <person name="Kotani H."/>
            <person name="Kato T."/>
            <person name="Asamizu E."/>
            <person name="Miyajima N."/>
            <person name="Sasamoto S."/>
            <person name="Kimura T."/>
            <person name="Hosouchi T."/>
            <person name="Kawashima K."/>
            <person name="Kohara M."/>
            <person name="Matsumoto M."/>
            <person name="Matsuno A."/>
            <person name="Muraki A."/>
            <person name="Nakayama S."/>
            <person name="Nakazaki N."/>
            <person name="Naruo K."/>
            <person name="Okumura S."/>
            <person name="Shinpo S."/>
            <person name="Takeuchi C."/>
            <person name="Wada T."/>
            <person name="Watanabe A."/>
            <person name="Yamada M."/>
            <person name="Yasuda M."/>
            <person name="Sato S."/>
            <person name="de la Bastide M."/>
            <person name="Huang E."/>
            <person name="Spiegel L."/>
            <person name="Gnoj L."/>
            <person name="O'Shaughnessy A."/>
            <person name="Preston R."/>
            <person name="Habermann K."/>
            <person name="Murray J."/>
            <person name="Johnson D."/>
            <person name="Rohlfing T."/>
            <person name="Nelson J."/>
            <person name="Stoneking T."/>
            <person name="Pepin K."/>
            <person name="Spieth J."/>
            <person name="Sekhon M."/>
            <person name="Armstrong J."/>
            <person name="Becker M."/>
            <person name="Belter E."/>
            <person name="Cordum H."/>
            <person name="Cordes M."/>
            <person name="Courtney L."/>
            <person name="Courtney W."/>
            <person name="Dante M."/>
            <person name="Du H."/>
            <person name="Edwards J."/>
            <person name="Fryman J."/>
            <person name="Haakensen B."/>
            <person name="Lamar E."/>
            <person name="Latreille P."/>
            <person name="Leonard S."/>
            <person name="Meyer R."/>
            <person name="Mulvaney E."/>
            <person name="Ozersky P."/>
            <person name="Riley A."/>
            <person name="Strowmatt C."/>
            <person name="Wagner-McPherson C."/>
            <person name="Wollam A."/>
            <person name="Yoakum M."/>
            <person name="Bell M."/>
            <person name="Dedhia N."/>
            <person name="Parnell L."/>
            <person name="Shah R."/>
            <person name="Rodriguez M."/>
            <person name="Hoon See L."/>
            <person name="Vil D."/>
            <person name="Baker J."/>
            <person name="Kirchoff K."/>
            <person name="Toth K."/>
            <person name="King L."/>
            <person name="Bahret A."/>
            <person name="Miller B."/>
            <person name="Marra M.A."/>
            <person name="Martienssen R."/>
            <person name="McCombie W.R."/>
            <person name="Wilson R.K."/>
            <person name="Murphy G."/>
            <person name="Bancroft I."/>
            <person name="Volckaert G."/>
            <person name="Wambutt R."/>
            <person name="Duesterhoeft A."/>
            <person name="Stiekema W."/>
            <person name="Pohl T."/>
            <person name="Entian K.-D."/>
            <person name="Terryn N."/>
            <person name="Hartley N."/>
            <person name="Bent E."/>
            <person name="Johnson S."/>
            <person name="Langham S.-A."/>
            <person name="McCullagh B."/>
            <person name="Robben J."/>
            <person name="Grymonprez B."/>
            <person name="Zimmermann W."/>
            <person name="Ramsperger U."/>
            <person name="Wedler H."/>
            <person name="Balke K."/>
            <person name="Wedler E."/>
            <person name="Peters S."/>
            <person name="van Staveren M."/>
            <person name="Dirkse W."/>
            <person name="Mooijman P."/>
            <person name="Klein Lankhorst R."/>
            <person name="Weitzenegger T."/>
            <person name="Bothe G."/>
            <person name="Rose M."/>
            <person name="Hauf J."/>
            <person name="Berneiser S."/>
            <person name="Hempel S."/>
            <person name="Feldpausch M."/>
            <person name="Lamberth S."/>
            <person name="Villarroel R."/>
            <person name="Gielen J."/>
            <person name="Ardiles W."/>
            <person name="Bents O."/>
            <person name="Lemcke K."/>
            <person name="Kolesov G."/>
            <person name="Mayer K.F.X."/>
            <person name="Rudd S."/>
            <person name="Schoof H."/>
            <person name="Schueller C."/>
            <person name="Zaccaria P."/>
            <person name="Mewes H.-W."/>
            <person name="Bevan M."/>
            <person name="Fransz P.F."/>
        </authorList>
    </citation>
    <scope>NUCLEOTIDE SEQUENCE [LARGE SCALE GENOMIC DNA]</scope>
    <source>
        <strain>cv. Columbia</strain>
    </source>
</reference>
<reference key="3">
    <citation type="journal article" date="2017" name="Plant J.">
        <title>Araport11: a complete reannotation of the Arabidopsis thaliana reference genome.</title>
        <authorList>
            <person name="Cheng C.Y."/>
            <person name="Krishnakumar V."/>
            <person name="Chan A.P."/>
            <person name="Thibaud-Nissen F."/>
            <person name="Schobel S."/>
            <person name="Town C.D."/>
        </authorList>
    </citation>
    <scope>GENOME REANNOTATION</scope>
    <source>
        <strain>cv. Columbia</strain>
    </source>
</reference>
<reference key="4">
    <citation type="journal article" date="2002" name="Science">
        <title>Functional annotation of a full-length Arabidopsis cDNA collection.</title>
        <authorList>
            <person name="Seki M."/>
            <person name="Narusaka M."/>
            <person name="Kamiya A."/>
            <person name="Ishida J."/>
            <person name="Satou M."/>
            <person name="Sakurai T."/>
            <person name="Nakajima M."/>
            <person name="Enju A."/>
            <person name="Akiyama K."/>
            <person name="Oono Y."/>
            <person name="Muramatsu M."/>
            <person name="Hayashizaki Y."/>
            <person name="Kawai J."/>
            <person name="Carninci P."/>
            <person name="Itoh M."/>
            <person name="Ishii Y."/>
            <person name="Arakawa T."/>
            <person name="Shibata K."/>
            <person name="Shinagawa A."/>
            <person name="Shinozaki K."/>
        </authorList>
    </citation>
    <scope>NUCLEOTIDE SEQUENCE [LARGE SCALE MRNA]</scope>
    <source>
        <strain>cv. Columbia</strain>
    </source>
</reference>
<reference key="5">
    <citation type="submission" date="2006-06" db="EMBL/GenBank/DDBJ databases">
        <title>Arabidopsis ORF clones.</title>
        <authorList>
            <person name="Quinitio C."/>
            <person name="Chen H."/>
            <person name="Kim C.J."/>
            <person name="Shinn P."/>
            <person name="Ecker J.R."/>
        </authorList>
    </citation>
    <scope>NUCLEOTIDE SEQUENCE [LARGE SCALE MRNA]</scope>
    <source>
        <strain>cv. Columbia</strain>
    </source>
</reference>
<reference key="6">
    <citation type="submission" date="2002-03" db="EMBL/GenBank/DDBJ databases">
        <title>Full-length cDNA from Arabidopsis thaliana.</title>
        <authorList>
            <person name="Brover V.V."/>
            <person name="Troukhan M.E."/>
            <person name="Alexandrov N.A."/>
            <person name="Lu Y.-P."/>
            <person name="Flavell R.B."/>
            <person name="Feldmann K.A."/>
        </authorList>
    </citation>
    <scope>NUCLEOTIDE SEQUENCE [LARGE SCALE MRNA]</scope>
</reference>
<reference key="7">
    <citation type="journal article" date="2002" name="Genome Biol.">
        <title>Evaluation and classification of RING-finger domains encoded by the Arabidopsis genome.</title>
        <authorList>
            <person name="Kosarev P."/>
            <person name="Mayer K.F.X."/>
            <person name="Hardtke C.S."/>
        </authorList>
    </citation>
    <scope>GENE FAMILY ORGANIZATION</scope>
</reference>
<reference key="8">
    <citation type="journal article" date="2005" name="Plant Physiol.">
        <title>Functional analysis of the RING-type ubiquitin ligase family of Arabidopsis.</title>
        <authorList>
            <person name="Stone S.L."/>
            <person name="Hauksdottir H."/>
            <person name="Troy A."/>
            <person name="Herschleb J."/>
            <person name="Kraft E."/>
            <person name="Callis J."/>
        </authorList>
    </citation>
    <scope>DOMAIN</scope>
</reference>
<reference key="9">
    <citation type="journal article" date="2010" name="FEBS J.">
        <title>The consensus motif for N-myristoylation of plant proteins in a wheat germ cell-free translation system.</title>
        <authorList>
            <person name="Yamauchi S."/>
            <person name="Fusada N."/>
            <person name="Hayashi H."/>
            <person name="Utsumi T."/>
            <person name="Uozumi N."/>
            <person name="Endo Y."/>
            <person name="Tozawa Y."/>
        </authorList>
    </citation>
    <scope>MYRISTOYLATION AT GLY-2</scope>
</reference>
<reference key="10">
    <citation type="journal article" date="2012" name="Plant Physiol.">
        <title>The ubiquitin E3 ligase LOSS OF GDU2 is required for GLUTAMINE DUMPER1-induced amino acid secretion in Arabidopsis.</title>
        <authorList>
            <person name="Pratelli R."/>
            <person name="Guerra D.D."/>
            <person name="Yu S."/>
            <person name="Wogulis M."/>
            <person name="Kraft E."/>
            <person name="Frommer W.B."/>
            <person name="Callis J."/>
            <person name="Pilot G."/>
        </authorList>
    </citation>
    <scope>GENE SUBFAMILY</scope>
    <scope>FUNCTION</scope>
</reference>
<keyword id="KW-0449">Lipoprotein</keyword>
<keyword id="KW-0479">Metal-binding</keyword>
<keyword id="KW-0519">Myristate</keyword>
<keyword id="KW-1185">Reference proteome</keyword>
<keyword id="KW-0808">Transferase</keyword>
<keyword id="KW-0833">Ubl conjugation pathway</keyword>
<keyword id="KW-0862">Zinc</keyword>
<keyword id="KW-0863">Zinc-finger</keyword>
<accession>Q9LYW5</accession>
<accession>Q8GZ27</accession>
<accession>Q8L8P7</accession>
<protein>
    <recommendedName>
        <fullName>Probable E3 ubiquitin-protein ligase LUL1</fullName>
        <ecNumber>2.3.2.27</ecNumber>
    </recommendedName>
    <alternativeName>
        <fullName evidence="5">Probable RING-type E3 ubiquitin transferase LUL1</fullName>
    </alternativeName>
    <alternativeName>
        <fullName>Protein LOG2-LIKE UBIQUITIN LIGASE 1</fullName>
    </alternativeName>
    <alternativeName>
        <fullName>RING finger protein 370</fullName>
    </alternativeName>
</protein>
<sequence>MGNLISLIFCCGRRQRSNIPPAMETAPLELPPNRFVFAAVPPYLNPNPNYVDQYPGNCLPPPVTEPPMLPYNFNHLHHYPPNSYQLPHPLFHGGRYPILPPPTYVHQKAVTIRNDVNLKKKTLTLIPDPENPNRLLVSFTFDASMPGRITVVFFATEDAECNLRATKEDTLPPITFDFGEGLGQKFIQSSGTGIDLTAFKDSELFKEVDTDVFPLAVKAEATPAEEGKSGSTNVQITQVVYTKEKGEIKIEVVKQILWVNKRRYELLEIYGIENTVDGSDEGKECVVCLSEPRDTTVLPCRHMCMCSGCAKALRFQTNLCPVCRQPVEMLLEINKNG</sequence>